<feature type="chain" id="PRO_0000300473" description="Uncharacterized oxidoreductase SAV2478">
    <location>
        <begin position="1"/>
        <end position="231"/>
    </location>
</feature>
<feature type="active site" description="Proton acceptor" evidence="1">
    <location>
        <position position="153"/>
    </location>
</feature>
<feature type="binding site" evidence="1">
    <location>
        <begin position="10"/>
        <end position="34"/>
    </location>
    <ligand>
        <name>NADP(+)</name>
        <dbReference type="ChEBI" id="CHEBI:58349"/>
    </ligand>
</feature>
<feature type="binding site" evidence="1">
    <location>
        <position position="140"/>
    </location>
    <ligand>
        <name>substrate</name>
    </ligand>
</feature>
<proteinExistence type="inferred from homology"/>
<gene>
    <name type="ordered locus">SAV2478</name>
</gene>
<name>Y2478_STAAM</name>
<keyword id="KW-0560">Oxidoreductase</keyword>
<evidence type="ECO:0000250" key="1"/>
<evidence type="ECO:0000305" key="2"/>
<protein>
    <recommendedName>
        <fullName>Uncharacterized oxidoreductase SAV2478</fullName>
        <ecNumber>1.-.-.-</ecNumber>
    </recommendedName>
</protein>
<comment type="similarity">
    <text evidence="2">Belongs to the short-chain dehydrogenases/reductases (SDR) family.</text>
</comment>
<accession>Q99RF5</accession>
<dbReference type="EC" id="1.-.-.-"/>
<dbReference type="EMBL" id="BA000017">
    <property type="protein sequence ID" value="BAB58640.1"/>
    <property type="molecule type" value="Genomic_DNA"/>
</dbReference>
<dbReference type="RefSeq" id="WP_000217456.1">
    <property type="nucleotide sequence ID" value="NC_002758.2"/>
</dbReference>
<dbReference type="SMR" id="Q99RF5"/>
<dbReference type="KEGG" id="sav:SAV2478"/>
<dbReference type="HOGENOM" id="CLU_010194_2_10_9"/>
<dbReference type="PhylomeDB" id="Q99RF5"/>
<dbReference type="Proteomes" id="UP000002481">
    <property type="component" value="Chromosome"/>
</dbReference>
<dbReference type="GO" id="GO:0016491">
    <property type="term" value="F:oxidoreductase activity"/>
    <property type="evidence" value="ECO:0007669"/>
    <property type="project" value="UniProtKB-KW"/>
</dbReference>
<dbReference type="CDD" id="cd05233">
    <property type="entry name" value="SDR_c"/>
    <property type="match status" value="1"/>
</dbReference>
<dbReference type="FunFam" id="3.40.50.720:FF:000047">
    <property type="entry name" value="NADP-dependent L-serine/L-allo-threonine dehydrogenase"/>
    <property type="match status" value="1"/>
</dbReference>
<dbReference type="Gene3D" id="3.40.50.720">
    <property type="entry name" value="NAD(P)-binding Rossmann-like Domain"/>
    <property type="match status" value="1"/>
</dbReference>
<dbReference type="InterPro" id="IPR036291">
    <property type="entry name" value="NAD(P)-bd_dom_sf"/>
</dbReference>
<dbReference type="InterPro" id="IPR002347">
    <property type="entry name" value="SDR_fam"/>
</dbReference>
<dbReference type="PANTHER" id="PTHR43115">
    <property type="entry name" value="DEHYDROGENASE/REDUCTASE SDR FAMILY MEMBER 11"/>
    <property type="match status" value="1"/>
</dbReference>
<dbReference type="PANTHER" id="PTHR43115:SF4">
    <property type="entry name" value="DEHYDROGENASE_REDUCTASE SDR FAMILY MEMBER 11"/>
    <property type="match status" value="1"/>
</dbReference>
<dbReference type="Pfam" id="PF00106">
    <property type="entry name" value="adh_short"/>
    <property type="match status" value="1"/>
</dbReference>
<dbReference type="PRINTS" id="PR00081">
    <property type="entry name" value="GDHRDH"/>
</dbReference>
<dbReference type="PRINTS" id="PR00080">
    <property type="entry name" value="SDRFAMILY"/>
</dbReference>
<dbReference type="SUPFAM" id="SSF51735">
    <property type="entry name" value="NAD(P)-binding Rossmann-fold domains"/>
    <property type="match status" value="1"/>
</dbReference>
<sequence length="231" mass="24578">MTVLTDKIAVVTGAGSGIGEAIATLLHEEGAKVVLAGRNKDKLQNVANQLAQDSVKVVPTDVTNKEEVDELMKIAQQTFGGLDIVINSAGQMLSSKITDYQVDEWDSMIDVNIKGTLYTAQAALPTMLEQSSGHLINIASISGFEVTKSSTIYSATKAAVHTITQGLEKELAKTGVKVTSISPGMVDTAITAAYNPSDRKKLDPQDIAEAVLYALTQPKHVNVNEITVRPV</sequence>
<reference key="1">
    <citation type="journal article" date="2001" name="Lancet">
        <title>Whole genome sequencing of meticillin-resistant Staphylococcus aureus.</title>
        <authorList>
            <person name="Kuroda M."/>
            <person name="Ohta T."/>
            <person name="Uchiyama I."/>
            <person name="Baba T."/>
            <person name="Yuzawa H."/>
            <person name="Kobayashi I."/>
            <person name="Cui L."/>
            <person name="Oguchi A."/>
            <person name="Aoki K."/>
            <person name="Nagai Y."/>
            <person name="Lian J.-Q."/>
            <person name="Ito T."/>
            <person name="Kanamori M."/>
            <person name="Matsumaru H."/>
            <person name="Maruyama A."/>
            <person name="Murakami H."/>
            <person name="Hosoyama A."/>
            <person name="Mizutani-Ui Y."/>
            <person name="Takahashi N.K."/>
            <person name="Sawano T."/>
            <person name="Inoue R."/>
            <person name="Kaito C."/>
            <person name="Sekimizu K."/>
            <person name="Hirakawa H."/>
            <person name="Kuhara S."/>
            <person name="Goto S."/>
            <person name="Yabuzaki J."/>
            <person name="Kanehisa M."/>
            <person name="Yamashita A."/>
            <person name="Oshima K."/>
            <person name="Furuya K."/>
            <person name="Yoshino C."/>
            <person name="Shiba T."/>
            <person name="Hattori M."/>
            <person name="Ogasawara N."/>
            <person name="Hayashi H."/>
            <person name="Hiramatsu K."/>
        </authorList>
    </citation>
    <scope>NUCLEOTIDE SEQUENCE [LARGE SCALE GENOMIC DNA]</scope>
    <source>
        <strain>Mu50 / ATCC 700699</strain>
    </source>
</reference>
<organism>
    <name type="scientific">Staphylococcus aureus (strain Mu50 / ATCC 700699)</name>
    <dbReference type="NCBI Taxonomy" id="158878"/>
    <lineage>
        <taxon>Bacteria</taxon>
        <taxon>Bacillati</taxon>
        <taxon>Bacillota</taxon>
        <taxon>Bacilli</taxon>
        <taxon>Bacillales</taxon>
        <taxon>Staphylococcaceae</taxon>
        <taxon>Staphylococcus</taxon>
    </lineage>
</organism>